<dbReference type="EMBL" id="U20535">
    <property type="protein sequence ID" value="AAC46632.1"/>
    <property type="molecule type" value="Genomic_DNA"/>
</dbReference>
<dbReference type="EMBL" id="Z81130">
    <property type="protein sequence ID" value="CAB03417.1"/>
    <property type="molecule type" value="Genomic_DNA"/>
</dbReference>
<dbReference type="PIR" id="T25193">
    <property type="entry name" value="T25193"/>
</dbReference>
<dbReference type="RefSeq" id="NP_492143.1">
    <property type="nucleotide sequence ID" value="NM_059742.8"/>
</dbReference>
<dbReference type="PDB" id="2MJH">
    <property type="method" value="NMR"/>
    <property type="chains" value="A=195-336"/>
</dbReference>
<dbReference type="PDB" id="3K6T">
    <property type="method" value="X-ray"/>
    <property type="resolution" value="2.04 A"/>
    <property type="chains" value="A/B/C/D=144-200"/>
</dbReference>
<dbReference type="PDB" id="3KBL">
    <property type="method" value="X-ray"/>
    <property type="resolution" value="2.28 A"/>
    <property type="chains" value="A/B/C/D=144-200"/>
</dbReference>
<dbReference type="PDB" id="4JVY">
    <property type="method" value="X-ray"/>
    <property type="resolution" value="2.85 A"/>
    <property type="chains" value="A/B=144-337"/>
</dbReference>
<dbReference type="PDBsum" id="2MJH"/>
<dbReference type="PDBsum" id="3K6T"/>
<dbReference type="PDBsum" id="3KBL"/>
<dbReference type="PDBsum" id="4JVY"/>
<dbReference type="BMRB" id="Q17339"/>
<dbReference type="SMR" id="Q17339"/>
<dbReference type="BioGRID" id="37974">
    <property type="interactions" value="108"/>
</dbReference>
<dbReference type="DIP" id="DIP-24870N"/>
<dbReference type="FunCoup" id="Q17339">
    <property type="interactions" value="35"/>
</dbReference>
<dbReference type="IntAct" id="Q17339">
    <property type="interactions" value="4"/>
</dbReference>
<dbReference type="STRING" id="6239.T23G11.3.1"/>
<dbReference type="BindingDB" id="Q17339"/>
<dbReference type="ChEMBL" id="CHEMBL1293302"/>
<dbReference type="DrugCentral" id="Q17339"/>
<dbReference type="iPTMnet" id="Q17339"/>
<dbReference type="PaxDb" id="6239-T23G11.3.2"/>
<dbReference type="PeptideAtlas" id="Q17339"/>
<dbReference type="EnsemblMetazoa" id="T23G11.3.1">
    <property type="protein sequence ID" value="T23G11.3.1"/>
    <property type="gene ID" value="WBGene00001595"/>
</dbReference>
<dbReference type="GeneID" id="172532"/>
<dbReference type="KEGG" id="cel:CELE_T23G11.3"/>
<dbReference type="UCSC" id="T23G11.3">
    <property type="organism name" value="c. elegans"/>
</dbReference>
<dbReference type="AGR" id="WB:WBGene00001595"/>
<dbReference type="CTD" id="172532"/>
<dbReference type="WormBase" id="T23G11.3">
    <property type="protein sequence ID" value="CE14096"/>
    <property type="gene ID" value="WBGene00001595"/>
    <property type="gene designation" value="gld-1"/>
</dbReference>
<dbReference type="eggNOG" id="KOG1588">
    <property type="taxonomic scope" value="Eukaryota"/>
</dbReference>
<dbReference type="GeneTree" id="ENSGT00940000167937"/>
<dbReference type="HOGENOM" id="CLU_573960_0_0_1"/>
<dbReference type="InParanoid" id="Q17339"/>
<dbReference type="OMA" id="PNPARVM"/>
<dbReference type="OrthoDB" id="6777263at2759"/>
<dbReference type="PhylomeDB" id="Q17339"/>
<dbReference type="SignaLink" id="Q17339"/>
<dbReference type="CD-CODE" id="73A75392">
    <property type="entry name" value="P-granule"/>
</dbReference>
<dbReference type="EvolutionaryTrace" id="Q17339"/>
<dbReference type="PRO" id="PR:Q17339"/>
<dbReference type="Proteomes" id="UP000001940">
    <property type="component" value="Chromosome I"/>
</dbReference>
<dbReference type="Bgee" id="WBGene00001595">
    <property type="expression patterns" value="Expressed in adult organism and 24 other cell types or tissues"/>
</dbReference>
<dbReference type="GO" id="GO:0005737">
    <property type="term" value="C:cytoplasm"/>
    <property type="evidence" value="ECO:0000314"/>
    <property type="project" value="WormBase"/>
</dbReference>
<dbReference type="GO" id="GO:0005829">
    <property type="term" value="C:cytosol"/>
    <property type="evidence" value="ECO:0000314"/>
    <property type="project" value="WormBase"/>
</dbReference>
<dbReference type="GO" id="GO:0005634">
    <property type="term" value="C:nucleus"/>
    <property type="evidence" value="ECO:0000318"/>
    <property type="project" value="GO_Central"/>
</dbReference>
<dbReference type="GO" id="GO:0043186">
    <property type="term" value="C:P granule"/>
    <property type="evidence" value="ECO:0000314"/>
    <property type="project" value="WormBase"/>
</dbReference>
<dbReference type="GO" id="GO:0003730">
    <property type="term" value="F:mRNA 3'-UTR binding"/>
    <property type="evidence" value="ECO:0000314"/>
    <property type="project" value="WormBase"/>
</dbReference>
<dbReference type="GO" id="GO:0048027">
    <property type="term" value="F:mRNA 5'-UTR binding"/>
    <property type="evidence" value="ECO:0000314"/>
    <property type="project" value="WormBase"/>
</dbReference>
<dbReference type="GO" id="GO:0003729">
    <property type="term" value="F:mRNA binding"/>
    <property type="evidence" value="ECO:0000318"/>
    <property type="project" value="GO_Central"/>
</dbReference>
<dbReference type="GO" id="GO:0003727">
    <property type="term" value="F:single-stranded RNA binding"/>
    <property type="evidence" value="ECO:0000314"/>
    <property type="project" value="WormBase"/>
</dbReference>
<dbReference type="GO" id="GO:0051321">
    <property type="term" value="P:meiotic cell cycle"/>
    <property type="evidence" value="ECO:0007669"/>
    <property type="project" value="UniProtKB-KW"/>
</dbReference>
<dbReference type="GO" id="GO:0010629">
    <property type="term" value="P:negative regulation of gene expression"/>
    <property type="evidence" value="ECO:0000315"/>
    <property type="project" value="UniProtKB"/>
</dbReference>
<dbReference type="GO" id="GO:2000623">
    <property type="term" value="P:negative regulation of nuclear-transcribed mRNA catabolic process, nonsense-mediated decay"/>
    <property type="evidence" value="ECO:0000315"/>
    <property type="project" value="WormBase"/>
</dbReference>
<dbReference type="GO" id="GO:0017148">
    <property type="term" value="P:negative regulation of translation"/>
    <property type="evidence" value="ECO:0000315"/>
    <property type="project" value="WormBase"/>
</dbReference>
<dbReference type="GO" id="GO:0030716">
    <property type="term" value="P:oocyte fate determination"/>
    <property type="evidence" value="ECO:0000316"/>
    <property type="project" value="UniProtKB"/>
</dbReference>
<dbReference type="GO" id="GO:0048477">
    <property type="term" value="P:oogenesis"/>
    <property type="evidence" value="ECO:0007669"/>
    <property type="project" value="UniProtKB-KW"/>
</dbReference>
<dbReference type="GO" id="GO:2000196">
    <property type="term" value="P:positive regulation of female gonad development"/>
    <property type="evidence" value="ECO:0000316"/>
    <property type="project" value="UniProtKB"/>
</dbReference>
<dbReference type="GO" id="GO:0060282">
    <property type="term" value="P:positive regulation of oocyte development"/>
    <property type="evidence" value="ECO:0000316"/>
    <property type="project" value="UniProtKB"/>
</dbReference>
<dbReference type="GO" id="GO:0010608">
    <property type="term" value="P:post-transcriptional regulation of gene expression"/>
    <property type="evidence" value="ECO:0000316"/>
    <property type="project" value="UniProtKB"/>
</dbReference>
<dbReference type="GO" id="GO:0010468">
    <property type="term" value="P:regulation of gene expression"/>
    <property type="evidence" value="ECO:0000316"/>
    <property type="project" value="UniProtKB"/>
</dbReference>
<dbReference type="GO" id="GO:1905936">
    <property type="term" value="P:regulation of germ cell proliferation"/>
    <property type="evidence" value="ECO:0000316"/>
    <property type="project" value="UniProtKB"/>
</dbReference>
<dbReference type="GO" id="GO:0048024">
    <property type="term" value="P:regulation of mRNA splicing, via spliceosome"/>
    <property type="evidence" value="ECO:0000318"/>
    <property type="project" value="GO_Central"/>
</dbReference>
<dbReference type="CDD" id="cd22383">
    <property type="entry name" value="KH-I_Hqk_like"/>
    <property type="match status" value="1"/>
</dbReference>
<dbReference type="FunFam" id="1.20.5.4010:FF:000002">
    <property type="entry name" value="Held out wings, isoform D"/>
    <property type="match status" value="1"/>
</dbReference>
<dbReference type="FunFam" id="3.30.1370.10:FF:000028">
    <property type="entry name" value="protein quaking isoform X2"/>
    <property type="match status" value="1"/>
</dbReference>
<dbReference type="Gene3D" id="1.20.5.4010">
    <property type="match status" value="1"/>
</dbReference>
<dbReference type="Gene3D" id="3.30.1370.10">
    <property type="entry name" value="K Homology domain, type 1"/>
    <property type="match status" value="1"/>
</dbReference>
<dbReference type="InterPro" id="IPR045071">
    <property type="entry name" value="BBP-like"/>
</dbReference>
<dbReference type="InterPro" id="IPR055256">
    <property type="entry name" value="KH_1_KHDC4/BBP-like"/>
</dbReference>
<dbReference type="InterPro" id="IPR004087">
    <property type="entry name" value="KH_dom"/>
</dbReference>
<dbReference type="InterPro" id="IPR036612">
    <property type="entry name" value="KH_dom_type_1_sf"/>
</dbReference>
<dbReference type="InterPro" id="IPR032377">
    <property type="entry name" value="STAR_dimer"/>
</dbReference>
<dbReference type="PANTHER" id="PTHR11208:SF125">
    <property type="entry name" value="KH DOMAIN-CONTAINING RNA-BINDING PROTEIN QKI"/>
    <property type="match status" value="1"/>
</dbReference>
<dbReference type="PANTHER" id="PTHR11208">
    <property type="entry name" value="RNA-BINDING PROTEIN RELATED"/>
    <property type="match status" value="1"/>
</dbReference>
<dbReference type="Pfam" id="PF22675">
    <property type="entry name" value="KH-I_KHDC4-BBP"/>
    <property type="match status" value="1"/>
</dbReference>
<dbReference type="Pfam" id="PF16544">
    <property type="entry name" value="STAR_dimer"/>
    <property type="match status" value="1"/>
</dbReference>
<dbReference type="SMART" id="SM00322">
    <property type="entry name" value="KH"/>
    <property type="match status" value="1"/>
</dbReference>
<dbReference type="SUPFAM" id="SSF54791">
    <property type="entry name" value="Eukaryotic type KH-domain (KH-domain type I)"/>
    <property type="match status" value="1"/>
</dbReference>
<accession>Q17339</accession>
<accession>O02540</accession>
<evidence type="ECO:0000256" key="1">
    <source>
        <dbReference type="SAM" id="MobiDB-lite"/>
    </source>
</evidence>
<evidence type="ECO:0000269" key="2">
    <source>
    </source>
</evidence>
<evidence type="ECO:0000269" key="3">
    <source>
    </source>
</evidence>
<evidence type="ECO:0000269" key="4">
    <source>
    </source>
</evidence>
<evidence type="ECO:0000269" key="5">
    <source>
    </source>
</evidence>
<evidence type="ECO:0000269" key="6">
    <source>
    </source>
</evidence>
<evidence type="ECO:0000269" key="7">
    <source>
    </source>
</evidence>
<evidence type="ECO:0000269" key="8">
    <source>
    </source>
</evidence>
<evidence type="ECO:0000269" key="9">
    <source>
    </source>
</evidence>
<evidence type="ECO:0007744" key="10">
    <source>
        <dbReference type="PDB" id="2MJH"/>
    </source>
</evidence>
<evidence type="ECO:0007744" key="11">
    <source>
        <dbReference type="PDB" id="3K6T"/>
    </source>
</evidence>
<evidence type="ECO:0007744" key="12">
    <source>
        <dbReference type="PDB" id="3KBL"/>
    </source>
</evidence>
<evidence type="ECO:0007744" key="13">
    <source>
        <dbReference type="PDB" id="4JVY"/>
    </source>
</evidence>
<evidence type="ECO:0007829" key="14">
    <source>
        <dbReference type="PDB" id="2MJH"/>
    </source>
</evidence>
<evidence type="ECO:0007829" key="15">
    <source>
        <dbReference type="PDB" id="3K6T"/>
    </source>
</evidence>
<evidence type="ECO:0007829" key="16">
    <source>
        <dbReference type="PDB" id="4JVY"/>
    </source>
</evidence>
<sequence length="463" mass="50586">MPSCTTPTYGVSTQLESQSSESPSRSSVMTPTSLDGDNSPRKRFPIIDNVPADRWPSTRRDGWSSVRAPPPARLTLSTNNRHIMSPISSAYSQTPNSLLSPAMFNPKSRSIFSPTLPATPMSYGKSSMDKSLFSPTATEPIEVEATVEYLADLVKEKKHLTLFPHMFSNVERLLDDEIGRVRVALFQTEFPRVELPEPAGDMISITEKIYVPKNEYPDYNFVGRILGPRGMTAKQLEQDTGCKIMVRGKGSMRDKSKESAHRGKANWEHLEDDLHVLVQCEDTENRVHIKLQAALEQVKKLLIPAPEGTDELKRKQLMELAIINGTYRPMKSPNPARVMTAVPLLSPTPLRSSGPVLMSPTPGSGLPSTTFGGSILSPTLTASNLLGSNVFDYSLLSPSMFDSFSSLQLASDLTFPKYPTTTSFVNSFPGLFTSASSFANQTNTNVSPSGASPSASSVNNTSF</sequence>
<reference key="1">
    <citation type="journal article" date="1995" name="Genes Dev.">
        <title>Mutations in gld-1, a female germ cell-specific tumor suppressor gene in Caenorhabditis elegans, affect a conserved domain also found in Src-associated protein Sam68.</title>
        <authorList>
            <person name="Jones A.R."/>
            <person name="Schedl T."/>
        </authorList>
    </citation>
    <scope>NUCLEOTIDE SEQUENCE [GENOMIC DNA]</scope>
    <scope>FUNCTION</scope>
    <source>
        <strain>Bristol N2</strain>
    </source>
</reference>
<reference key="2">
    <citation type="journal article" date="1998" name="Science">
        <title>Genome sequence of the nematode C. elegans: a platform for investigating biology.</title>
        <authorList>
            <consortium name="The C. elegans sequencing consortium"/>
        </authorList>
    </citation>
    <scope>NUCLEOTIDE SEQUENCE [LARGE SCALE GENOMIC DNA]</scope>
    <source>
        <strain>Bristol N2</strain>
    </source>
</reference>
<reference key="3">
    <citation type="journal article" date="2001" name="Genes Dev.">
        <title>Identification of in vivo mRNA targets of GLD-1, a maxi-KH motif containing protein required for C. elegans germ cell development.</title>
        <authorList>
            <person name="Lee M.-H."/>
            <person name="Schedl T."/>
        </authorList>
    </citation>
    <scope>CHARACTERIZATION</scope>
</reference>
<reference key="4">
    <citation type="journal article" date="2009" name="Dev. Cell">
        <title>Translational repression of cyclin E prevents precocious mitosis and embryonic gene activation during C. elegans meiosis.</title>
        <authorList>
            <person name="Biedermann B."/>
            <person name="Wright J."/>
            <person name="Senften M."/>
            <person name="Kalchhauser I."/>
            <person name="Sarathy G."/>
            <person name="Lee M.H."/>
            <person name="Ciosk R."/>
        </authorList>
    </citation>
    <scope>FUNCTION</scope>
    <scope>RNA-BINDING</scope>
</reference>
<reference key="5">
    <citation type="journal article" date="2011" name="PLoS Genet.">
        <title>Cyclin E and Cdk2 control GLD-1, the mitosis/meiosis decision, and germline stem cells in Caenorhabditis elegans.</title>
        <authorList>
            <person name="Jeong J."/>
            <person name="Verheyden J.M."/>
            <person name="Kimble J."/>
        </authorList>
    </citation>
    <scope>FUNCTION</scope>
    <scope>PHOSPHORYLATION</scope>
    <scope>MUTAGENESIS OF SER-22; SER-39 AND THR-348</scope>
</reference>
<reference key="6">
    <citation type="journal article" date="2012" name="Mol. Biol. Cell">
        <title>POS-1 and GLD-1 repress glp-1 translation through a conserved binding-site cluster.</title>
        <authorList>
            <person name="Farley B.M."/>
            <person name="Ryder S.P."/>
        </authorList>
    </citation>
    <scope>FUNCTION</scope>
</reference>
<reference key="7">
    <citation type="journal article" date="2017" name="Nature">
        <title>A lysosomal switch triggers proteostasis renewal in the immortal C. elegans germ lineage.</title>
        <authorList>
            <person name="Bohnert K.A."/>
            <person name="Kenyon C."/>
        </authorList>
    </citation>
    <scope>FUNCTION</scope>
    <scope>TISSUE SPECIFICITY</scope>
</reference>
<reference evidence="11 12" key="8">
    <citation type="journal article" date="2010" name="Structure">
        <title>Structure of the GLD-1 homodimerization domain: insights into STAR protein-mediated translational regulation.</title>
        <authorList>
            <person name="Beuck C."/>
            <person name="Szymczyna B.R."/>
            <person name="Kerkow D.E."/>
            <person name="Carmel A.B."/>
            <person name="Columbus L."/>
            <person name="Stanfield R.L."/>
            <person name="Williamson J.R."/>
        </authorList>
    </citation>
    <scope>X-RAY CRYSTALLOGRAPHY (2.04 ANGSTROMS) OF 144-200</scope>
    <scope>SUBUNIT</scope>
    <scope>DOMAIN</scope>
    <scope>MUTAGENESIS OF TYR-149; LEU-150; GLU-156; LEU-160; PHE-163; PRO-164; PHE-167; ASN-169; VAL-170; GLU-177 AND VAL-181</scope>
</reference>
<reference evidence="13" key="9">
    <citation type="journal article" date="2013" name="Genes Dev.">
        <title>Structure-function studies of STAR family Quaking proteins bound to their in vivo RNA target sites.</title>
        <authorList>
            <person name="Teplova M."/>
            <person name="Hafner M."/>
            <person name="Teplov D."/>
            <person name="Essig K."/>
            <person name="Tuschl T."/>
            <person name="Patel D.J."/>
        </authorList>
    </citation>
    <scope>X-RAY CRYSTALLOGRAPHY (2.85 ANGSTROMS) OF 144-337 IN COMPLEX WITH RNA</scope>
    <scope>RNA-BINDING</scope>
    <scope>DOMAIN</scope>
</reference>
<reference evidence="10" key="10">
    <citation type="journal article" date="2014" name="Nucleic Acids Res.">
        <title>Structural and functional implications of the QUA2 domain on RNA recognition by GLD-1.</title>
        <authorList>
            <person name="Daubner G.M."/>
            <person name="Brummer A."/>
            <person name="Tocchini C."/>
            <person name="Gerhardy S."/>
            <person name="Ciosk R."/>
            <person name="Zavolan M."/>
            <person name="Allain F.H."/>
        </authorList>
    </citation>
    <scope>STRUCTURE BY NMR OF 195-336 IN COMPLEX WITH RNA</scope>
    <scope>FUNCTION</scope>
    <scope>RNA-BINDING</scope>
    <scope>MUTAGENESIS OF PRO-228; LYS-313; ARG-314; LYS-315 AND LEU-320</scope>
</reference>
<proteinExistence type="evidence at protein level"/>
<keyword id="KW-0002">3D-structure</keyword>
<keyword id="KW-0217">Developmental protein</keyword>
<keyword id="KW-0221">Differentiation</keyword>
<keyword id="KW-0469">Meiosis</keyword>
<keyword id="KW-0896">Oogenesis</keyword>
<keyword id="KW-0597">Phosphoprotein</keyword>
<keyword id="KW-1185">Reference proteome</keyword>
<keyword id="KW-0694">RNA-binding</keyword>
<keyword id="KW-0810">Translation regulation</keyword>
<name>GLD1_CAEEL</name>
<organism>
    <name type="scientific">Caenorhabditis elegans</name>
    <dbReference type="NCBI Taxonomy" id="6239"/>
    <lineage>
        <taxon>Eukaryota</taxon>
        <taxon>Metazoa</taxon>
        <taxon>Ecdysozoa</taxon>
        <taxon>Nematoda</taxon>
        <taxon>Chromadorea</taxon>
        <taxon>Rhabditida</taxon>
        <taxon>Rhabditina</taxon>
        <taxon>Rhabditomorpha</taxon>
        <taxon>Rhabditoidea</taxon>
        <taxon>Rhabditidae</taxon>
        <taxon>Peloderinae</taxon>
        <taxon>Caenorhabditis</taxon>
    </lineage>
</organism>
<gene>
    <name type="primary">gld-1</name>
    <name type="ORF">T23G11.3</name>
</gene>
<comment type="function">
    <text evidence="2 3 5 7 8 9">RNA-binding protein which recognizes the 5'-UACUCAU-3' RNA consensus sequence (PubMed:24838563). Binds sequences in both the 5'coding and the 3'-UTR region of rme-2 mRNA (PubMed:11562350). Binds sequences in the 3'-UTR region of cye-1 mRNA. Binds to cyb-2.1, cyb-2.2 and cyb-3 mRNA (PubMed:19758560). Binds sequences in the 3'-UTR region of tra-2 mRNA (PubMed:24838563). Binds to the 3' UTR of Notch receptor homolog glp-1, thereby repressing glp-1 translation in the embryo (PubMed:7601353). Binding to the glp-1 3' UTR is inhibited by pos-1 binding to an overlapping binding site in the glp-1 3' UTR (PubMed:7601353). Germ line-specific tumor suppressor essential for oogenesis (PubMed:7601353). Controls the spatial pattern of translation of multiple oogenesis specific mRNAs (e.g. yolk receptor rme-2) by repression of translation during early meiotic prophase (leptotene to pachytene) and then derepression of translation during diplotene/ diakinesis, following its degradation. Also functions to promote the male sexual fate in the hermaphrodite germline but not the male germline (PubMed:11562350, PubMed:24838563, PubMed:7601353). Represses translation of the vacuolar ATPase component vha-13 in the distal gonad (PubMed:29168500). Functions redundantly with gld-2 to promote the initiation of meiotic development and/or inhibit stem cell proliferation (PubMed:11562350). By regulating cye-1 expression, prevents entry into mitosis in meiotic germline cells (PubMed:19758560, PubMed:21455289).</text>
</comment>
<comment type="subunit">
    <text evidence="4">Homodimer.</text>
</comment>
<comment type="tissue specificity">
    <text evidence="8">Expressed in proximal and distal oocytes in female worms but is eliminated from proximal oocytes following mating.</text>
</comment>
<comment type="domain">
    <text evidence="6">The KH domain and the Qua2 region are involved in RNA binding.</text>
</comment>
<comment type="PTM">
    <text evidence="5">Phosphorylated by cdk-2 which may negatively regulate its expression in distal mitotic germline cells.</text>
</comment>
<comment type="PTM">
    <text evidence="8">Undergoes proteasomal degradation in proximal oocytes following mating.</text>
</comment>
<protein>
    <recommendedName>
        <fullName>Female germline-specific tumor suppressor gld-1</fullName>
    </recommendedName>
    <alternativeName>
        <fullName>Defective in germ line development protein 1</fullName>
    </alternativeName>
</protein>
<feature type="chain" id="PRO_0000050112" description="Female germline-specific tumor suppressor gld-1">
    <location>
        <begin position="1"/>
        <end position="463"/>
    </location>
</feature>
<feature type="domain" description="KH">
    <location>
        <begin position="208"/>
        <end position="260"/>
    </location>
</feature>
<feature type="region of interest" description="Disordered" evidence="1">
    <location>
        <begin position="1"/>
        <end position="76"/>
    </location>
</feature>
<feature type="region of interest" description="Qua1 domain; involved in homodimerization" evidence="4">
    <location>
        <begin position="135"/>
        <end position="205"/>
    </location>
</feature>
<feature type="region of interest" description="Qua2 domain; involved in RNA binding" evidence="6">
    <location>
        <begin position="305"/>
        <end position="336"/>
    </location>
</feature>
<feature type="region of interest" description="Disordered" evidence="1">
    <location>
        <begin position="443"/>
        <end position="463"/>
    </location>
</feature>
<feature type="compositionally biased region" description="Polar residues" evidence="1">
    <location>
        <begin position="1"/>
        <end position="10"/>
    </location>
</feature>
<feature type="compositionally biased region" description="Low complexity" evidence="1">
    <location>
        <begin position="11"/>
        <end position="31"/>
    </location>
</feature>
<feature type="compositionally biased region" description="Low complexity" evidence="1">
    <location>
        <begin position="447"/>
        <end position="457"/>
    </location>
</feature>
<feature type="site" description="Involved in RNA binding" evidence="7">
    <location>
        <position position="220"/>
    </location>
</feature>
<feature type="site" description="Important for the interaction between KH and Qua2 domains" evidence="7">
    <location>
        <position position="228"/>
    </location>
</feature>
<feature type="site" description="Involved in RNA binding" evidence="6 7">
    <location>
        <position position="243"/>
    </location>
</feature>
<feature type="site" description="Involved in RNA binding" evidence="6 7">
    <location>
        <position position="247"/>
    </location>
</feature>
<feature type="site" description="Important for RNA binding" evidence="6">
    <location>
        <position position="253"/>
    </location>
</feature>
<feature type="site" description="Involved in RNA binding" evidence="6 7">
    <location>
        <position position="313"/>
    </location>
</feature>
<feature type="site" description="Involved in RNA binding" evidence="6 7">
    <location>
        <position position="316"/>
    </location>
</feature>
<feature type="site" description="Important for the interaction between KH and Qua2 domains" evidence="7">
    <location>
        <position position="320"/>
    </location>
</feature>
<feature type="mutagenesis site" description="May abolish phosphorylation by cdk-2. Increased expression in the gonad mitotic zone and reduction in the size of the mitotic region; when associated with A-39 and A-348." evidence="5">
    <original>S</original>
    <variation>A</variation>
    <location>
        <position position="22"/>
    </location>
</feature>
<feature type="mutagenesis site" description="May abolish phosphorylation by cdk-2. Increased expression in the gonad mitotic zone and reduction in the size of the mitotic region; when associated with A-22 and A-348." evidence="5">
    <original>S</original>
    <variation>A</variation>
    <location>
        <position position="39"/>
    </location>
</feature>
<feature type="mutagenesis site" description="Moderate decrease in monomer stability." evidence="4">
    <original>Y</original>
    <variation>F</variation>
    <location>
        <position position="149"/>
    </location>
</feature>
<feature type="mutagenesis site" description="Moderate decrease in monomer stability." evidence="4">
    <original>L</original>
    <variation>A</variation>
    <location>
        <position position="150"/>
    </location>
</feature>
<feature type="mutagenesis site" description="No effect on homodimer stability." evidence="4">
    <original>E</original>
    <variation>A</variation>
    <location>
        <position position="156"/>
    </location>
</feature>
<feature type="mutagenesis site" description="Moderate decrease in homodimer stability." evidence="4">
    <original>L</original>
    <variation>A</variation>
    <location>
        <position position="160"/>
    </location>
</feature>
<feature type="mutagenesis site" description="Moderate decrease in homodimer stability." evidence="4">
    <original>F</original>
    <variation>A</variation>
    <location>
        <position position="163"/>
    </location>
</feature>
<feature type="mutagenesis site" description="No effect on homodimer stability." evidence="4">
    <original>P</original>
    <variation>A</variation>
    <location>
        <position position="164"/>
    </location>
</feature>
<feature type="mutagenesis site" description="Moderate decrease in homodimer stability." evidence="4">
    <original>F</original>
    <variation>A</variation>
    <location>
        <position position="167"/>
    </location>
</feature>
<feature type="mutagenesis site" description="No effect on homodimer stability." evidence="4">
    <original>N</original>
    <variation>A</variation>
    <location>
        <position position="169"/>
    </location>
</feature>
<feature type="mutagenesis site" description="No effect on homodimer stability." evidence="4">
    <original>V</original>
    <variation>A</variation>
    <location>
        <position position="170"/>
    </location>
</feature>
<feature type="mutagenesis site" description="Severe decrease in homodimer stability." evidence="4">
    <original>L</original>
    <variation>A</variation>
    <location>
        <position position="173"/>
    </location>
</feature>
<feature type="mutagenesis site" description="Severe decrease in monomer stability." evidence="4">
    <original>E</original>
    <variation>A</variation>
    <location>
        <position position="177"/>
    </location>
</feature>
<feature type="mutagenesis site" description="Loss of monomer stability." evidence="4">
    <original>E</original>
    <variation>G</variation>
    <location>
        <position position="177"/>
    </location>
</feature>
<feature type="mutagenesis site" description="Moderate decrease in monomer stability." evidence="4">
    <original>V</original>
    <variation>A</variation>
    <location>
        <position position="181"/>
    </location>
</feature>
<feature type="mutagenesis site" description="19-fold decrease in RNA binding affinity." evidence="7">
    <original>P</original>
    <variation>A</variation>
    <location>
        <position position="228"/>
    </location>
</feature>
<feature type="mutagenesis site" description="In rrr1; 89-fold decrease in RNA binding affinity. Small abnormal stacked oocytes and feminization of germline. Overexpression of oma-2 and to a lesser extent of egg-1 in germline." evidence="7">
    <original>P</original>
    <variation>S</variation>
    <location>
        <position position="228"/>
    </location>
</feature>
<feature type="mutagenesis site" description="64-fold decrease in RNA binding affinity." evidence="7">
    <original>K</original>
    <variation>A</variation>
    <location>
        <position position="313"/>
    </location>
</feature>
<feature type="mutagenesis site" description="11-fold decrease in RNA binding affinity; when associated with K-314." evidence="7">
    <original>K</original>
    <variation>R</variation>
    <location>
        <position position="313"/>
    </location>
</feature>
<feature type="mutagenesis site" description="1.2-fold decrease in RNA binding affinity. 11-fold decrease in RNA binding affinity; when associated with R-313. 1.3-fold decrease in RNA binding affinity; when associated with R-315." evidence="7">
    <original>R</original>
    <variation>K</variation>
    <location>
        <position position="314"/>
    </location>
</feature>
<feature type="mutagenesis site" description="1.3-fold decrease in RNA binding affinity; when associated with K-314." evidence="7">
    <original>K</original>
    <variation>R</variation>
    <location>
        <position position="315"/>
    </location>
</feature>
<feature type="mutagenesis site" description="26-fold decrease in RNA binding affinity." evidence="7">
    <original>L</original>
    <variation>S</variation>
    <location>
        <position position="320"/>
    </location>
</feature>
<feature type="mutagenesis site" description="May abolish phosphorylation by cdk-2. Increased expression in the gonad mitotic zone and reduction in the size of the mitotic region; when associated with A-22 and A-39." evidence="5">
    <original>T</original>
    <variation>A</variation>
    <location>
        <position position="348"/>
    </location>
</feature>
<feature type="helix" evidence="15">
    <location>
        <begin position="147"/>
        <end position="160"/>
    </location>
</feature>
<feature type="turn" evidence="15">
    <location>
        <begin position="164"/>
        <end position="166"/>
    </location>
</feature>
<feature type="helix" evidence="15">
    <location>
        <begin position="168"/>
        <end position="189"/>
    </location>
</feature>
<feature type="strand" evidence="16">
    <location>
        <begin position="202"/>
        <end position="210"/>
    </location>
</feature>
<feature type="turn" evidence="16">
    <location>
        <begin position="213"/>
        <end position="215"/>
    </location>
</feature>
<feature type="helix" evidence="16">
    <location>
        <begin position="221"/>
        <end position="226"/>
    </location>
</feature>
<feature type="helix" evidence="16">
    <location>
        <begin position="228"/>
        <end position="230"/>
    </location>
</feature>
<feature type="helix" evidence="16">
    <location>
        <begin position="231"/>
        <end position="240"/>
    </location>
</feature>
<feature type="strand" evidence="16">
    <location>
        <begin position="243"/>
        <end position="248"/>
    </location>
</feature>
<feature type="helix" evidence="14">
    <location>
        <begin position="249"/>
        <end position="251"/>
    </location>
</feature>
<feature type="strand" evidence="16">
    <location>
        <begin position="252"/>
        <end position="254"/>
    </location>
</feature>
<feature type="helix" evidence="16">
    <location>
        <begin position="255"/>
        <end position="261"/>
    </location>
</feature>
<feature type="helix" evidence="16">
    <location>
        <begin position="268"/>
        <end position="271"/>
    </location>
</feature>
<feature type="strand" evidence="16">
    <location>
        <begin position="274"/>
        <end position="283"/>
    </location>
</feature>
<feature type="turn" evidence="16">
    <location>
        <begin position="284"/>
        <end position="286"/>
    </location>
</feature>
<feature type="helix" evidence="16">
    <location>
        <begin position="287"/>
        <end position="301"/>
    </location>
</feature>
<feature type="helix" evidence="16">
    <location>
        <begin position="311"/>
        <end position="325"/>
    </location>
</feature>
<feature type="turn" evidence="16">
    <location>
        <begin position="328"/>
        <end position="330"/>
    </location>
</feature>